<reference key="1">
    <citation type="journal article" date="2007" name="PLoS ONE">
        <title>Analysis of the neurotoxin complex genes in Clostridium botulinum A1-A4 and B1 strains: BoNT/A3, /Ba4 and /B1 clusters are located within plasmids.</title>
        <authorList>
            <person name="Smith T.J."/>
            <person name="Hill K.K."/>
            <person name="Foley B.T."/>
            <person name="Detter J.C."/>
            <person name="Munk A.C."/>
            <person name="Bruce D.C."/>
            <person name="Doggett N.A."/>
            <person name="Smith L.A."/>
            <person name="Marks J.D."/>
            <person name="Xie G."/>
            <person name="Brettin T.S."/>
        </authorList>
    </citation>
    <scope>NUCLEOTIDE SEQUENCE [LARGE SCALE GENOMIC DNA]</scope>
    <source>
        <strain>ATCC 19397 / Type A</strain>
    </source>
</reference>
<accession>A7FUV2</accession>
<sequence length="185" mass="20828">MISAGDLRKGTTFEQDGQVYVVVEFLHVKPGKGAAFVRTKLKNAITGAVTETTFNPTAKLQEAVIERKEMQYLYTDGELYYFMDQETFEQIPLNYDKVEEAIKFLKENMFATIKFFKGEAFSVEAPNFVELLISHTEPGAKGNTTSNVMKPATLETGATIQVPLFVNEGETIRVDTRTGEYMERV</sequence>
<evidence type="ECO:0000255" key="1">
    <source>
        <dbReference type="HAMAP-Rule" id="MF_00141"/>
    </source>
</evidence>
<name>EFP_CLOB1</name>
<gene>
    <name evidence="1" type="primary">efp</name>
    <name type="ordered locus">CLB_1834</name>
</gene>
<protein>
    <recommendedName>
        <fullName evidence="1">Elongation factor P</fullName>
        <shortName evidence="1">EF-P</shortName>
    </recommendedName>
</protein>
<comment type="function">
    <text evidence="1">Involved in peptide bond synthesis. Stimulates efficient translation and peptide-bond synthesis on native or reconstituted 70S ribosomes in vitro. Probably functions indirectly by altering the affinity of the ribosome for aminoacyl-tRNA, thus increasing their reactivity as acceptors for peptidyl transferase.</text>
</comment>
<comment type="pathway">
    <text evidence="1">Protein biosynthesis; polypeptide chain elongation.</text>
</comment>
<comment type="subcellular location">
    <subcellularLocation>
        <location evidence="1">Cytoplasm</location>
    </subcellularLocation>
</comment>
<comment type="similarity">
    <text evidence="1">Belongs to the elongation factor P family.</text>
</comment>
<keyword id="KW-0963">Cytoplasm</keyword>
<keyword id="KW-0251">Elongation factor</keyword>
<keyword id="KW-0648">Protein biosynthesis</keyword>
<organism>
    <name type="scientific">Clostridium botulinum (strain ATCC 19397 / Type A)</name>
    <dbReference type="NCBI Taxonomy" id="441770"/>
    <lineage>
        <taxon>Bacteria</taxon>
        <taxon>Bacillati</taxon>
        <taxon>Bacillota</taxon>
        <taxon>Clostridia</taxon>
        <taxon>Eubacteriales</taxon>
        <taxon>Clostridiaceae</taxon>
        <taxon>Clostridium</taxon>
    </lineage>
</organism>
<feature type="chain" id="PRO_1000010717" description="Elongation factor P">
    <location>
        <begin position="1"/>
        <end position="185"/>
    </location>
</feature>
<dbReference type="EMBL" id="CP000726">
    <property type="protein sequence ID" value="ABS35563.1"/>
    <property type="molecule type" value="Genomic_DNA"/>
</dbReference>
<dbReference type="RefSeq" id="WP_003358905.1">
    <property type="nucleotide sequence ID" value="NC_009697.1"/>
</dbReference>
<dbReference type="SMR" id="A7FUV2"/>
<dbReference type="GeneID" id="5186152"/>
<dbReference type="KEGG" id="cba:CLB_1834"/>
<dbReference type="HOGENOM" id="CLU_074944_0_1_9"/>
<dbReference type="UniPathway" id="UPA00345"/>
<dbReference type="GO" id="GO:0005737">
    <property type="term" value="C:cytoplasm"/>
    <property type="evidence" value="ECO:0007669"/>
    <property type="project" value="UniProtKB-SubCell"/>
</dbReference>
<dbReference type="GO" id="GO:0003746">
    <property type="term" value="F:translation elongation factor activity"/>
    <property type="evidence" value="ECO:0007669"/>
    <property type="project" value="UniProtKB-UniRule"/>
</dbReference>
<dbReference type="GO" id="GO:0043043">
    <property type="term" value="P:peptide biosynthetic process"/>
    <property type="evidence" value="ECO:0007669"/>
    <property type="project" value="InterPro"/>
</dbReference>
<dbReference type="CDD" id="cd04470">
    <property type="entry name" value="S1_EF-P_repeat_1"/>
    <property type="match status" value="1"/>
</dbReference>
<dbReference type="CDD" id="cd05794">
    <property type="entry name" value="S1_EF-P_repeat_2"/>
    <property type="match status" value="1"/>
</dbReference>
<dbReference type="FunFam" id="2.30.30.30:FF:000003">
    <property type="entry name" value="Elongation factor P"/>
    <property type="match status" value="1"/>
</dbReference>
<dbReference type="FunFam" id="2.40.50.140:FF:000004">
    <property type="entry name" value="Elongation factor P"/>
    <property type="match status" value="1"/>
</dbReference>
<dbReference type="FunFam" id="2.40.50.140:FF:000009">
    <property type="entry name" value="Elongation factor P"/>
    <property type="match status" value="1"/>
</dbReference>
<dbReference type="Gene3D" id="2.30.30.30">
    <property type="match status" value="1"/>
</dbReference>
<dbReference type="Gene3D" id="2.40.50.140">
    <property type="entry name" value="Nucleic acid-binding proteins"/>
    <property type="match status" value="2"/>
</dbReference>
<dbReference type="HAMAP" id="MF_00141">
    <property type="entry name" value="EF_P"/>
    <property type="match status" value="1"/>
</dbReference>
<dbReference type="InterPro" id="IPR015365">
    <property type="entry name" value="Elong-fact-P_C"/>
</dbReference>
<dbReference type="InterPro" id="IPR012340">
    <property type="entry name" value="NA-bd_OB-fold"/>
</dbReference>
<dbReference type="InterPro" id="IPR014722">
    <property type="entry name" value="Rib_uL2_dom2"/>
</dbReference>
<dbReference type="InterPro" id="IPR020599">
    <property type="entry name" value="Transl_elong_fac_P/YeiP"/>
</dbReference>
<dbReference type="InterPro" id="IPR013185">
    <property type="entry name" value="Transl_elong_KOW-like"/>
</dbReference>
<dbReference type="InterPro" id="IPR001059">
    <property type="entry name" value="Transl_elong_P/YeiP_cen"/>
</dbReference>
<dbReference type="InterPro" id="IPR013852">
    <property type="entry name" value="Transl_elong_P/YeiP_CS"/>
</dbReference>
<dbReference type="InterPro" id="IPR011768">
    <property type="entry name" value="Transl_elongation_fac_P"/>
</dbReference>
<dbReference type="InterPro" id="IPR008991">
    <property type="entry name" value="Translation_prot_SH3-like_sf"/>
</dbReference>
<dbReference type="NCBIfam" id="TIGR00038">
    <property type="entry name" value="efp"/>
    <property type="match status" value="1"/>
</dbReference>
<dbReference type="NCBIfam" id="NF001810">
    <property type="entry name" value="PRK00529.1"/>
    <property type="match status" value="1"/>
</dbReference>
<dbReference type="PANTHER" id="PTHR30053">
    <property type="entry name" value="ELONGATION FACTOR P"/>
    <property type="match status" value="1"/>
</dbReference>
<dbReference type="PANTHER" id="PTHR30053:SF12">
    <property type="entry name" value="ELONGATION FACTOR P (EF-P) FAMILY PROTEIN"/>
    <property type="match status" value="1"/>
</dbReference>
<dbReference type="Pfam" id="PF01132">
    <property type="entry name" value="EFP"/>
    <property type="match status" value="1"/>
</dbReference>
<dbReference type="Pfam" id="PF08207">
    <property type="entry name" value="EFP_N"/>
    <property type="match status" value="1"/>
</dbReference>
<dbReference type="Pfam" id="PF09285">
    <property type="entry name" value="Elong-fact-P_C"/>
    <property type="match status" value="1"/>
</dbReference>
<dbReference type="PIRSF" id="PIRSF005901">
    <property type="entry name" value="EF-P"/>
    <property type="match status" value="1"/>
</dbReference>
<dbReference type="SMART" id="SM01185">
    <property type="entry name" value="EFP"/>
    <property type="match status" value="1"/>
</dbReference>
<dbReference type="SMART" id="SM00841">
    <property type="entry name" value="Elong-fact-P_C"/>
    <property type="match status" value="1"/>
</dbReference>
<dbReference type="SUPFAM" id="SSF50249">
    <property type="entry name" value="Nucleic acid-binding proteins"/>
    <property type="match status" value="2"/>
</dbReference>
<dbReference type="SUPFAM" id="SSF50104">
    <property type="entry name" value="Translation proteins SH3-like domain"/>
    <property type="match status" value="1"/>
</dbReference>
<dbReference type="PROSITE" id="PS01275">
    <property type="entry name" value="EFP"/>
    <property type="match status" value="1"/>
</dbReference>
<proteinExistence type="inferred from homology"/>